<reference key="1">
    <citation type="journal article" date="2005" name="Vet. Immunol. Immunopathol.">
        <title>CMAP27, a novel chicken cathelicidin-like antimicrobial protein.</title>
        <authorList>
            <person name="van Dijk A."/>
            <person name="Veldhuizen E.J.A."/>
            <person name="van Asten A.J.A.M."/>
            <person name="Haagsman H.P."/>
        </authorList>
    </citation>
    <scope>NUCLEOTIDE SEQUENCE [MRNA]</scope>
    <scope>TISSUE SPECIFICITY</scope>
    <source>
        <tissue>Bone marrow</tissue>
    </source>
</reference>
<reference key="2">
    <citation type="journal article" date="2006" name="J. Biol. Chem.">
        <title>Identification and functional characterization of three chicken cathelicidins with potent antimicrobial activity.</title>
        <authorList>
            <person name="Xiao Y."/>
            <person name="Cai Y."/>
            <person name="Bommineni Y.R."/>
            <person name="Fernando S.C."/>
            <person name="Prakash O."/>
            <person name="Gilliland S.E."/>
            <person name="Zhang G."/>
        </authorList>
    </citation>
    <scope>NUCLEOTIDE SEQUENCE [MRNA]</scope>
    <scope>FUNCTION</scope>
</reference>
<protein>
    <recommendedName>
        <fullName>Cathelicidin-2</fullName>
        <shortName>CATH-2</shortName>
    </recommendedName>
    <alternativeName>
        <fullName>Fowlicidin-2</fullName>
    </alternativeName>
    <alternativeName>
        <fullName>Myeloid antimicrobial peptide 27</fullName>
    </alternativeName>
</protein>
<name>CTHL2_CHICK</name>
<gene>
    <name type="primary">CATHL2</name>
    <name type="synonym">CMAP27</name>
</gene>
<feature type="signal peptide" evidence="2">
    <location>
        <begin position="1"/>
        <end position="17"/>
    </location>
</feature>
<feature type="propeptide" id="PRO_0000333222" evidence="2">
    <location>
        <begin position="18"/>
        <end position="122"/>
    </location>
</feature>
<feature type="peptide" id="PRO_0000333223" description="Cathelicidin-2">
    <location>
        <begin position="123"/>
        <end position="154"/>
    </location>
</feature>
<feature type="disulfide bond" evidence="1">
    <location>
        <begin position="75"/>
        <end position="86"/>
    </location>
</feature>
<feature type="disulfide bond" evidence="1">
    <location>
        <begin position="97"/>
        <end position="114"/>
    </location>
</feature>
<feature type="sequence conflict" description="In Ref. 1; AAX20012." evidence="5" ref="1">
    <original>V</original>
    <variation>L</variation>
    <location>
        <position position="15"/>
    </location>
</feature>
<keyword id="KW-0044">Antibiotic</keyword>
<keyword id="KW-0929">Antimicrobial</keyword>
<keyword id="KW-1015">Disulfide bond</keyword>
<keyword id="KW-0391">Immunity</keyword>
<keyword id="KW-0399">Innate immunity</keyword>
<keyword id="KW-1185">Reference proteome</keyword>
<keyword id="KW-0964">Secreted</keyword>
<keyword id="KW-0732">Signal</keyword>
<evidence type="ECO:0000250" key="1"/>
<evidence type="ECO:0000255" key="2"/>
<evidence type="ECO:0000269" key="3">
    <source>
    </source>
</evidence>
<evidence type="ECO:0000269" key="4">
    <source>
    </source>
</evidence>
<evidence type="ECO:0000305" key="5"/>
<comment type="function">
    <text evidence="4">Binds bacterial lipopolysaccharide (LPS). Has potent antimicrobial activity against Gram-positive and Gram-negative bacteria (in vitro). Has hemolytic activity (in vitro). May play a role in the innate immune response.</text>
</comment>
<comment type="subcellular location">
    <subcellularLocation>
        <location evidence="5">Secreted</location>
    </subcellularLocation>
</comment>
<comment type="tissue specificity">
    <text evidence="3">Detected in trachea, lung, proventriculus, duodenum, jejunum, ileum, caeca, colon, caecal tonsil, bursa of Fabricius, kidney, ovary, testis, thymus, liver, spleen, bone marrow, skin, uropygial gland, muscle and brain.</text>
</comment>
<comment type="similarity">
    <text evidence="5">Belongs to the cathelicidin family.</text>
</comment>
<sequence>MLSCWVLLLALLGGVCALPAPLSYPQALIQAVDSYNQRPEVQNAFRLLSADPEPGPGVDLSTLRALNFTIMETECTPSARLPVDDCDFKENGVIRDCSGPVSVLQDTPEINLRCRDASSDPVLVQRGRFGRFLRKIRRFRPKVTITIQGSARFG</sequence>
<organism>
    <name type="scientific">Gallus gallus</name>
    <name type="common">Chicken</name>
    <dbReference type="NCBI Taxonomy" id="9031"/>
    <lineage>
        <taxon>Eukaryota</taxon>
        <taxon>Metazoa</taxon>
        <taxon>Chordata</taxon>
        <taxon>Craniata</taxon>
        <taxon>Vertebrata</taxon>
        <taxon>Euteleostomi</taxon>
        <taxon>Archelosauria</taxon>
        <taxon>Archosauria</taxon>
        <taxon>Dinosauria</taxon>
        <taxon>Saurischia</taxon>
        <taxon>Theropoda</taxon>
        <taxon>Coelurosauria</taxon>
        <taxon>Aves</taxon>
        <taxon>Neognathae</taxon>
        <taxon>Galloanserae</taxon>
        <taxon>Galliformes</taxon>
        <taxon>Phasianidae</taxon>
        <taxon>Phasianinae</taxon>
        <taxon>Gallus</taxon>
    </lineage>
</organism>
<dbReference type="EMBL" id="AY817057">
    <property type="protein sequence ID" value="AAX20012.1"/>
    <property type="molecule type" value="mRNA"/>
</dbReference>
<dbReference type="EMBL" id="DQ092352">
    <property type="protein sequence ID" value="AAZ42400.1"/>
    <property type="molecule type" value="mRNA"/>
</dbReference>
<dbReference type="EMBL" id="DQ092350">
    <property type="protein sequence ID" value="AAZ65842.1"/>
    <property type="molecule type" value="Genomic_DNA"/>
</dbReference>
<dbReference type="RefSeq" id="NP_001020001.2">
    <property type="nucleotide sequence ID" value="NM_001024830.2"/>
</dbReference>
<dbReference type="SMR" id="Q2IAL7"/>
<dbReference type="FunCoup" id="Q2IAL7">
    <property type="interactions" value="72"/>
</dbReference>
<dbReference type="STRING" id="9031.ENSGALP00000030658"/>
<dbReference type="PaxDb" id="9031-ENSGALP00000030658"/>
<dbReference type="GeneID" id="420407"/>
<dbReference type="KEGG" id="gga:420407"/>
<dbReference type="CTD" id="420407"/>
<dbReference type="VEuPathDB" id="HostDB:geneid_420407"/>
<dbReference type="eggNOG" id="ENOG502SAES">
    <property type="taxonomic scope" value="Eukaryota"/>
</dbReference>
<dbReference type="HOGENOM" id="CLU_121724_1_1_1"/>
<dbReference type="InParanoid" id="Q2IAL7"/>
<dbReference type="OrthoDB" id="9930485at2759"/>
<dbReference type="PhylomeDB" id="Q2IAL7"/>
<dbReference type="Reactome" id="R-GGA-6798695">
    <property type="pathway name" value="Neutrophil degranulation"/>
</dbReference>
<dbReference type="Reactome" id="R-GGA-6803157">
    <property type="pathway name" value="Antimicrobial peptides"/>
</dbReference>
<dbReference type="PRO" id="PR:Q2IAL7"/>
<dbReference type="Proteomes" id="UP000000539">
    <property type="component" value="Chromosome 2"/>
</dbReference>
<dbReference type="Bgee" id="ENSGALG00000019696">
    <property type="expression patterns" value="Expressed in granulocyte and 4 other cell types or tissues"/>
</dbReference>
<dbReference type="GO" id="GO:0005615">
    <property type="term" value="C:extracellular space"/>
    <property type="evidence" value="ECO:0000318"/>
    <property type="project" value="GO_Central"/>
</dbReference>
<dbReference type="GO" id="GO:0001530">
    <property type="term" value="F:lipopolysaccharide binding"/>
    <property type="evidence" value="ECO:0000315"/>
    <property type="project" value="AgBase"/>
</dbReference>
<dbReference type="GO" id="GO:0140367">
    <property type="term" value="P:antibacterial innate immune response"/>
    <property type="evidence" value="ECO:0000315"/>
    <property type="project" value="GO_Central"/>
</dbReference>
<dbReference type="GO" id="GO:0061844">
    <property type="term" value="P:antimicrobial humoral immune response mediated by antimicrobial peptide"/>
    <property type="evidence" value="ECO:0000314"/>
    <property type="project" value="AgBase"/>
</dbReference>
<dbReference type="GO" id="GO:0050829">
    <property type="term" value="P:defense response to Gram-negative bacterium"/>
    <property type="evidence" value="ECO:0000318"/>
    <property type="project" value="GO_Central"/>
</dbReference>
<dbReference type="GO" id="GO:0050830">
    <property type="term" value="P:defense response to Gram-positive bacterium"/>
    <property type="evidence" value="ECO:0000318"/>
    <property type="project" value="GO_Central"/>
</dbReference>
<dbReference type="GO" id="GO:0045087">
    <property type="term" value="P:innate immune response"/>
    <property type="evidence" value="ECO:0000318"/>
    <property type="project" value="GO_Central"/>
</dbReference>
<dbReference type="GO" id="GO:0042116">
    <property type="term" value="P:macrophage activation"/>
    <property type="evidence" value="ECO:0000314"/>
    <property type="project" value="AgBase"/>
</dbReference>
<dbReference type="FunFam" id="3.10.450.10:FF:000003">
    <property type="entry name" value="Cathelicidin antimicrobial peptide"/>
    <property type="match status" value="1"/>
</dbReference>
<dbReference type="Gene3D" id="3.10.450.10">
    <property type="match status" value="1"/>
</dbReference>
<dbReference type="InterPro" id="IPR001894">
    <property type="entry name" value="Cathelicidin-like"/>
</dbReference>
<dbReference type="InterPro" id="IPR046350">
    <property type="entry name" value="Cystatin_sf"/>
</dbReference>
<dbReference type="PANTHER" id="PTHR10206">
    <property type="entry name" value="CATHELICIDIN"/>
    <property type="match status" value="1"/>
</dbReference>
<dbReference type="PANTHER" id="PTHR10206:SF0">
    <property type="entry name" value="CATHELICIDIN B1-RELATED"/>
    <property type="match status" value="1"/>
</dbReference>
<dbReference type="Pfam" id="PF00666">
    <property type="entry name" value="Cathelicidins"/>
    <property type="match status" value="1"/>
</dbReference>
<dbReference type="SUPFAM" id="SSF54403">
    <property type="entry name" value="Cystatin/monellin"/>
    <property type="match status" value="1"/>
</dbReference>
<proteinExistence type="evidence at transcript level"/>
<accession>Q2IAL7</accession>
<accession>Q56QZ4</accession>